<name>SYC_HERAR</name>
<protein>
    <recommendedName>
        <fullName evidence="1">Cysteine--tRNA ligase</fullName>
        <ecNumber evidence="1">6.1.1.16</ecNumber>
    </recommendedName>
    <alternativeName>
        <fullName evidence="1">Cysteinyl-tRNA synthetase</fullName>
        <shortName evidence="1">CysRS</shortName>
    </alternativeName>
</protein>
<keyword id="KW-0030">Aminoacyl-tRNA synthetase</keyword>
<keyword id="KW-0067">ATP-binding</keyword>
<keyword id="KW-0963">Cytoplasm</keyword>
<keyword id="KW-0436">Ligase</keyword>
<keyword id="KW-0479">Metal-binding</keyword>
<keyword id="KW-0547">Nucleotide-binding</keyword>
<keyword id="KW-0648">Protein biosynthesis</keyword>
<keyword id="KW-1185">Reference proteome</keyword>
<keyword id="KW-0862">Zinc</keyword>
<sequence length="462" mass="51827">MSALKIYNTLAREKQLFTPIDPGKVRMYVCGMTVYDYCHIGHARVMVVFDLVQRWLRASGFDVTYVRNITDIDDKIIKRAAENGETISQLTQRFIDAMDEDAAALGVQKPDHEPRATNYVPQMLGLIDMLERNGLAYKAADGDVNYSVRDFAGYGKLSGKSLDDLRAGERVDVNTGKHDPLDFVLWKSSKENEPEEVKWSSKWGSGRPGWHIECSAMACELLGEQFDIHGGGADLQFPHHENEIAQSEGASGHTFVNYWMHNGFVRVDNEKMSKSLGNFFTIREVLEKFDAEVVRFFILRAHYRSQLNYSDAHLDDARNALTRMYTALKDVAPDHLPLDMTEAHAVRFIDAMNDDFNTPLAIAVLFELANEINREKSPVLARQLIGLAGIVGLLQRPAQQFLHAGLAGADEMETLIIGQIAARADAKKAKNFAEADRIRAALLEKGIILEDKPGGLTEWRRA</sequence>
<proteinExistence type="inferred from homology"/>
<gene>
    <name evidence="1" type="primary">cysS</name>
    <name type="ordered locus">HEAR1286</name>
</gene>
<feature type="chain" id="PRO_1000006589" description="Cysteine--tRNA ligase">
    <location>
        <begin position="1"/>
        <end position="462"/>
    </location>
</feature>
<feature type="short sequence motif" description="'HIGH' region">
    <location>
        <begin position="32"/>
        <end position="42"/>
    </location>
</feature>
<feature type="short sequence motif" description="'KMSKS' region">
    <location>
        <begin position="271"/>
        <end position="275"/>
    </location>
</feature>
<feature type="binding site" evidence="1">
    <location>
        <position position="30"/>
    </location>
    <ligand>
        <name>Zn(2+)</name>
        <dbReference type="ChEBI" id="CHEBI:29105"/>
    </ligand>
</feature>
<feature type="binding site" evidence="1">
    <location>
        <position position="214"/>
    </location>
    <ligand>
        <name>Zn(2+)</name>
        <dbReference type="ChEBI" id="CHEBI:29105"/>
    </ligand>
</feature>
<feature type="binding site" evidence="1">
    <location>
        <position position="239"/>
    </location>
    <ligand>
        <name>Zn(2+)</name>
        <dbReference type="ChEBI" id="CHEBI:29105"/>
    </ligand>
</feature>
<feature type="binding site" evidence="1">
    <location>
        <position position="243"/>
    </location>
    <ligand>
        <name>Zn(2+)</name>
        <dbReference type="ChEBI" id="CHEBI:29105"/>
    </ligand>
</feature>
<feature type="binding site" evidence="1">
    <location>
        <position position="274"/>
    </location>
    <ligand>
        <name>ATP</name>
        <dbReference type="ChEBI" id="CHEBI:30616"/>
    </ligand>
</feature>
<organism>
    <name type="scientific">Herminiimonas arsenicoxydans</name>
    <dbReference type="NCBI Taxonomy" id="204773"/>
    <lineage>
        <taxon>Bacteria</taxon>
        <taxon>Pseudomonadati</taxon>
        <taxon>Pseudomonadota</taxon>
        <taxon>Betaproteobacteria</taxon>
        <taxon>Burkholderiales</taxon>
        <taxon>Oxalobacteraceae</taxon>
        <taxon>Herminiimonas</taxon>
    </lineage>
</organism>
<accession>A4G4M2</accession>
<dbReference type="EC" id="6.1.1.16" evidence="1"/>
<dbReference type="EMBL" id="CU207211">
    <property type="protein sequence ID" value="CAL61459.1"/>
    <property type="molecule type" value="Genomic_DNA"/>
</dbReference>
<dbReference type="SMR" id="A4G4M2"/>
<dbReference type="STRING" id="204773.HEAR1286"/>
<dbReference type="KEGG" id="har:HEAR1286"/>
<dbReference type="eggNOG" id="COG0215">
    <property type="taxonomic scope" value="Bacteria"/>
</dbReference>
<dbReference type="HOGENOM" id="CLU_013528_0_1_4"/>
<dbReference type="OrthoDB" id="9815130at2"/>
<dbReference type="Proteomes" id="UP000006697">
    <property type="component" value="Chromosome"/>
</dbReference>
<dbReference type="GO" id="GO:0005829">
    <property type="term" value="C:cytosol"/>
    <property type="evidence" value="ECO:0007669"/>
    <property type="project" value="TreeGrafter"/>
</dbReference>
<dbReference type="GO" id="GO:0005524">
    <property type="term" value="F:ATP binding"/>
    <property type="evidence" value="ECO:0007669"/>
    <property type="project" value="UniProtKB-UniRule"/>
</dbReference>
<dbReference type="GO" id="GO:0004817">
    <property type="term" value="F:cysteine-tRNA ligase activity"/>
    <property type="evidence" value="ECO:0007669"/>
    <property type="project" value="UniProtKB-UniRule"/>
</dbReference>
<dbReference type="GO" id="GO:0008270">
    <property type="term" value="F:zinc ion binding"/>
    <property type="evidence" value="ECO:0007669"/>
    <property type="project" value="UniProtKB-UniRule"/>
</dbReference>
<dbReference type="GO" id="GO:0006423">
    <property type="term" value="P:cysteinyl-tRNA aminoacylation"/>
    <property type="evidence" value="ECO:0007669"/>
    <property type="project" value="UniProtKB-UniRule"/>
</dbReference>
<dbReference type="CDD" id="cd07963">
    <property type="entry name" value="Anticodon_Ia_Cys"/>
    <property type="match status" value="1"/>
</dbReference>
<dbReference type="CDD" id="cd00672">
    <property type="entry name" value="CysRS_core"/>
    <property type="match status" value="1"/>
</dbReference>
<dbReference type="FunFam" id="3.40.50.620:FF:000009">
    <property type="entry name" value="Cysteine--tRNA ligase"/>
    <property type="match status" value="1"/>
</dbReference>
<dbReference type="Gene3D" id="1.20.120.1910">
    <property type="entry name" value="Cysteine-tRNA ligase, C-terminal anti-codon recognition domain"/>
    <property type="match status" value="1"/>
</dbReference>
<dbReference type="Gene3D" id="3.40.50.620">
    <property type="entry name" value="HUPs"/>
    <property type="match status" value="1"/>
</dbReference>
<dbReference type="HAMAP" id="MF_00041">
    <property type="entry name" value="Cys_tRNA_synth"/>
    <property type="match status" value="1"/>
</dbReference>
<dbReference type="InterPro" id="IPR015803">
    <property type="entry name" value="Cys-tRNA-ligase"/>
</dbReference>
<dbReference type="InterPro" id="IPR015273">
    <property type="entry name" value="Cys-tRNA-synt_Ia_DALR"/>
</dbReference>
<dbReference type="InterPro" id="IPR024909">
    <property type="entry name" value="Cys-tRNA/MSH_ligase"/>
</dbReference>
<dbReference type="InterPro" id="IPR014729">
    <property type="entry name" value="Rossmann-like_a/b/a_fold"/>
</dbReference>
<dbReference type="InterPro" id="IPR032678">
    <property type="entry name" value="tRNA-synt_1_cat_dom"/>
</dbReference>
<dbReference type="InterPro" id="IPR009080">
    <property type="entry name" value="tRNAsynth_Ia_anticodon-bd"/>
</dbReference>
<dbReference type="NCBIfam" id="TIGR00435">
    <property type="entry name" value="cysS"/>
    <property type="match status" value="1"/>
</dbReference>
<dbReference type="PANTHER" id="PTHR10890:SF3">
    <property type="entry name" value="CYSTEINE--TRNA LIGASE, CYTOPLASMIC"/>
    <property type="match status" value="1"/>
</dbReference>
<dbReference type="PANTHER" id="PTHR10890">
    <property type="entry name" value="CYSTEINYL-TRNA SYNTHETASE"/>
    <property type="match status" value="1"/>
</dbReference>
<dbReference type="Pfam" id="PF09190">
    <property type="entry name" value="DALR_2"/>
    <property type="match status" value="1"/>
</dbReference>
<dbReference type="Pfam" id="PF01406">
    <property type="entry name" value="tRNA-synt_1e"/>
    <property type="match status" value="1"/>
</dbReference>
<dbReference type="PRINTS" id="PR00983">
    <property type="entry name" value="TRNASYNTHCYS"/>
</dbReference>
<dbReference type="SMART" id="SM00840">
    <property type="entry name" value="DALR_2"/>
    <property type="match status" value="1"/>
</dbReference>
<dbReference type="SUPFAM" id="SSF47323">
    <property type="entry name" value="Anticodon-binding domain of a subclass of class I aminoacyl-tRNA synthetases"/>
    <property type="match status" value="1"/>
</dbReference>
<dbReference type="SUPFAM" id="SSF52374">
    <property type="entry name" value="Nucleotidylyl transferase"/>
    <property type="match status" value="1"/>
</dbReference>
<reference key="1">
    <citation type="journal article" date="2007" name="PLoS Genet.">
        <title>A tale of two oxidation states: bacterial colonization of arsenic-rich environments.</title>
        <authorList>
            <person name="Muller D."/>
            <person name="Medigue C."/>
            <person name="Koechler S."/>
            <person name="Barbe V."/>
            <person name="Barakat M."/>
            <person name="Talla E."/>
            <person name="Bonnefoy V."/>
            <person name="Krin E."/>
            <person name="Arsene-Ploetze F."/>
            <person name="Carapito C."/>
            <person name="Chandler M."/>
            <person name="Cournoyer B."/>
            <person name="Cruveiller S."/>
            <person name="Dossat C."/>
            <person name="Duval S."/>
            <person name="Heymann M."/>
            <person name="Leize E."/>
            <person name="Lieutaud A."/>
            <person name="Lievremont D."/>
            <person name="Makita Y."/>
            <person name="Mangenot S."/>
            <person name="Nitschke W."/>
            <person name="Ortet P."/>
            <person name="Perdrial N."/>
            <person name="Schoepp B."/>
            <person name="Siguier P."/>
            <person name="Simeonova D.D."/>
            <person name="Rouy Z."/>
            <person name="Segurens B."/>
            <person name="Turlin E."/>
            <person name="Vallenet D."/>
            <person name="van Dorsselaer A."/>
            <person name="Weiss S."/>
            <person name="Weissenbach J."/>
            <person name="Lett M.-C."/>
            <person name="Danchin A."/>
            <person name="Bertin P.N."/>
        </authorList>
    </citation>
    <scope>NUCLEOTIDE SEQUENCE [LARGE SCALE GENOMIC DNA]</scope>
    <source>
        <strain>ULPAs1</strain>
    </source>
</reference>
<comment type="catalytic activity">
    <reaction evidence="1">
        <text>tRNA(Cys) + L-cysteine + ATP = L-cysteinyl-tRNA(Cys) + AMP + diphosphate</text>
        <dbReference type="Rhea" id="RHEA:17773"/>
        <dbReference type="Rhea" id="RHEA-COMP:9661"/>
        <dbReference type="Rhea" id="RHEA-COMP:9679"/>
        <dbReference type="ChEBI" id="CHEBI:30616"/>
        <dbReference type="ChEBI" id="CHEBI:33019"/>
        <dbReference type="ChEBI" id="CHEBI:35235"/>
        <dbReference type="ChEBI" id="CHEBI:78442"/>
        <dbReference type="ChEBI" id="CHEBI:78517"/>
        <dbReference type="ChEBI" id="CHEBI:456215"/>
        <dbReference type="EC" id="6.1.1.16"/>
    </reaction>
</comment>
<comment type="cofactor">
    <cofactor evidence="1">
        <name>Zn(2+)</name>
        <dbReference type="ChEBI" id="CHEBI:29105"/>
    </cofactor>
    <text evidence="1">Binds 1 zinc ion per subunit.</text>
</comment>
<comment type="subunit">
    <text evidence="1">Monomer.</text>
</comment>
<comment type="subcellular location">
    <subcellularLocation>
        <location evidence="1">Cytoplasm</location>
    </subcellularLocation>
</comment>
<comment type="similarity">
    <text evidence="1">Belongs to the class-I aminoacyl-tRNA synthetase family.</text>
</comment>
<evidence type="ECO:0000255" key="1">
    <source>
        <dbReference type="HAMAP-Rule" id="MF_00041"/>
    </source>
</evidence>